<feature type="chain" id="PRO_0000457052" description="B-type lectin plumieribetin">
    <location>
        <begin position="1" status="less than"/>
        <end position="113"/>
    </location>
</feature>
<feature type="domain" description="Bulb-type lectin" evidence="1">
    <location>
        <begin position="1"/>
        <end position="109"/>
    </location>
</feature>
<feature type="non-terminal residue" evidence="4">
    <location>
        <position position="1"/>
    </location>
</feature>
<sequence>NYLSKNDELRKGDSLVSNNGEFKAVFQDDANFVIYGWQPLWASDTYGSDAIRLCMQADCNLVMYNGSGQARWHTNTSKGDCNMCRLFLTNEGKLVLNKESTEIWNSDKNKGSK</sequence>
<organism>
    <name type="scientific">Scorpaena plumieri</name>
    <name type="common">Spotted scorpionfish</name>
    <dbReference type="NCBI Taxonomy" id="274700"/>
    <lineage>
        <taxon>Eukaryota</taxon>
        <taxon>Metazoa</taxon>
        <taxon>Chordata</taxon>
        <taxon>Craniata</taxon>
        <taxon>Vertebrata</taxon>
        <taxon>Euteleostomi</taxon>
        <taxon>Actinopterygii</taxon>
        <taxon>Neopterygii</taxon>
        <taxon>Teleostei</taxon>
        <taxon>Neoteleostei</taxon>
        <taxon>Acanthomorphata</taxon>
        <taxon>Eupercaria</taxon>
        <taxon>Perciformes</taxon>
        <taxon>Scorpaenoidei</taxon>
        <taxon>Scorpaenidae</taxon>
        <taxon>Scorpaeninae</taxon>
        <taxon>Scorpaena</taxon>
    </lineage>
</organism>
<name>LEC_SCOPL</name>
<keyword id="KW-0903">Direct protein sequencing</keyword>
<keyword id="KW-0430">Lectin</keyword>
<keyword id="KW-0964">Secreted</keyword>
<reference key="1">
    <citation type="journal article" date="2009" name="J. Biol. Chem.">
        <title>Plumieribetin, a fish lectin homologous to mannose-binding B-type lectins, inhibits the collagen-binding alpha1beta1 integrin.</title>
        <authorList>
            <person name="de Santana Evangelista K."/>
            <person name="Andrich F."/>
            <person name="Figueiredo de Rezende F."/>
            <person name="Niland S."/>
            <person name="Cordeiro M.N."/>
            <person name="Horlacher T."/>
            <person name="Castelli R."/>
            <person name="Schmidt-Hederich A."/>
            <person name="Seeberger P.H."/>
            <person name="Sanchez E.F."/>
            <person name="Richardson M."/>
            <person name="Gomes de Figueiredo S."/>
            <person name="Eble J.A."/>
        </authorList>
    </citation>
    <scope>PROTEIN SEQUENCE</scope>
    <scope>FUNCTION</scope>
    <scope>SUBCELLULAR LOCATION</scope>
    <scope>TISSUE SPECIFICITY</scope>
    <scope>SUBUNIT</scope>
    <scope>MASS SPECTROMETRY</scope>
    <source>
        <tissue>Venom</tissue>
    </source>
</reference>
<protein>
    <recommendedName>
        <fullName evidence="3">B-type lectin plumieribetin</fullName>
    </recommendedName>
</protein>
<accession>P0DQV9</accession>
<evidence type="ECO:0000255" key="1">
    <source>
        <dbReference type="PROSITE-ProRule" id="PRU00038"/>
    </source>
</evidence>
<evidence type="ECO:0000269" key="2">
    <source>
    </source>
</evidence>
<evidence type="ECO:0000303" key="3">
    <source>
    </source>
</evidence>
<evidence type="ECO:0000305" key="4">
    <source>
    </source>
</evidence>
<comment type="function">
    <text evidence="2">May contribute to some of the local and systemic effects of envenomation by the scorpionfish. Preferentially recognizes mannose-containing carbohydrate structures, but its interaction with single mannose residues is weak. Potently inhibits alpha-1-beta-1 integrin (ITGA1/ITGB1) binding to basement membrane collagen IV in a divalent cation-independent manner. In addition, moderately inhibits both laminin binding integrins alpha-3-beta-1 (ITGA3/ITGB1) and alpha-7-beta-1 (ITGA7/ITGB1). Weakens the cell-collagen contacts, reduces cell spreading, and alters the actin cytoskeleton, after the compensating alpha-2-beta-1 integrin is blocked. On the cellular level, fails to completely detach hepatocarcinoma HepG2 cells and primary arterial smooth muscle cells from the collagen IV fragment CB3.</text>
</comment>
<comment type="subunit">
    <text evidence="2">Homotetramer. Interacts with alpha-1-beta-1 integrin (ITGA1/ITGB1).</text>
</comment>
<comment type="subcellular location">
    <subcellularLocation>
        <location evidence="2">Secreted</location>
    </subcellularLocation>
    <text evidence="2">Secreted in venom and in skin mucus.</text>
</comment>
<comment type="tissue specificity">
    <text evidence="2">Expressed by sting venom glands and is also found in skin mucus. Not found in other tissues tested.</text>
</comment>
<comment type="PTM">
    <text evidence="2">Not glycosylated. Not N-glycosylated and not O-glycosylated with the mostcommon O-linked glycoconjugates.</text>
</comment>
<comment type="PTM">
    <text evidence="2">The N-terminus is blocked.</text>
</comment>
<comment type="mass spectrometry"/>
<comment type="miscellaneous">
    <text evidence="2">Does not bind alpha-2-beta-1 integrin (ITGA2/ITGB1).</text>
</comment>
<dbReference type="SMR" id="P0DQV9"/>
<dbReference type="GO" id="GO:0005576">
    <property type="term" value="C:extracellular region"/>
    <property type="evidence" value="ECO:0007669"/>
    <property type="project" value="UniProtKB-SubCell"/>
</dbReference>
<dbReference type="GO" id="GO:0030246">
    <property type="term" value="F:carbohydrate binding"/>
    <property type="evidence" value="ECO:0007669"/>
    <property type="project" value="UniProtKB-KW"/>
</dbReference>
<dbReference type="Gene3D" id="2.90.10.10">
    <property type="entry name" value="Bulb-type lectin domain"/>
    <property type="match status" value="2"/>
</dbReference>
<dbReference type="InterPro" id="IPR001480">
    <property type="entry name" value="Bulb-type_lectin_dom"/>
</dbReference>
<dbReference type="InterPro" id="IPR036426">
    <property type="entry name" value="Bulb-type_lectin_dom_sf"/>
</dbReference>
<dbReference type="SMART" id="SM00108">
    <property type="entry name" value="B_lectin"/>
    <property type="match status" value="1"/>
</dbReference>
<dbReference type="SUPFAM" id="SSF51110">
    <property type="entry name" value="alpha-D-mannose-specific plant lectins"/>
    <property type="match status" value="1"/>
</dbReference>
<dbReference type="PROSITE" id="PS50927">
    <property type="entry name" value="BULB_LECTIN"/>
    <property type="match status" value="1"/>
</dbReference>
<proteinExistence type="evidence at protein level"/>